<evidence type="ECO:0000255" key="1">
    <source>
        <dbReference type="HAMAP-Rule" id="MF_00438"/>
    </source>
</evidence>
<sequence length="34" mass="3756">MEVNILAFIATALFILVPTAFLLIIYVKTVSQSD</sequence>
<dbReference type="EMBL" id="AP009123">
    <property type="protein sequence ID" value="BAF41241.1"/>
    <property type="molecule type" value="Genomic_DNA"/>
</dbReference>
<dbReference type="RefSeq" id="YP_913181.1">
    <property type="nucleotide sequence ID" value="NC_008641.1"/>
</dbReference>
<dbReference type="SMR" id="A0ZZ29"/>
<dbReference type="GeneID" id="4575227"/>
<dbReference type="GO" id="GO:0009535">
    <property type="term" value="C:chloroplast thylakoid membrane"/>
    <property type="evidence" value="ECO:0007669"/>
    <property type="project" value="UniProtKB-SubCell"/>
</dbReference>
<dbReference type="GO" id="GO:0009523">
    <property type="term" value="C:photosystem II"/>
    <property type="evidence" value="ECO:0007669"/>
    <property type="project" value="UniProtKB-KW"/>
</dbReference>
<dbReference type="GO" id="GO:0019684">
    <property type="term" value="P:photosynthesis, light reaction"/>
    <property type="evidence" value="ECO:0007669"/>
    <property type="project" value="InterPro"/>
</dbReference>
<dbReference type="HAMAP" id="MF_00438">
    <property type="entry name" value="PSII_PsbM"/>
    <property type="match status" value="1"/>
</dbReference>
<dbReference type="InterPro" id="IPR007826">
    <property type="entry name" value="PSII_PsbM"/>
</dbReference>
<dbReference type="InterPro" id="IPR037269">
    <property type="entry name" value="PSII_PsbM_sf"/>
</dbReference>
<dbReference type="NCBIfam" id="TIGR03038">
    <property type="entry name" value="PS_II_psbM"/>
    <property type="match status" value="1"/>
</dbReference>
<dbReference type="PANTHER" id="PTHR35774">
    <property type="entry name" value="PHOTOSYSTEM II REACTION CENTER PROTEIN M"/>
    <property type="match status" value="1"/>
</dbReference>
<dbReference type="PANTHER" id="PTHR35774:SF1">
    <property type="entry name" value="PHOTOSYSTEM II REACTION CENTER PROTEIN M"/>
    <property type="match status" value="1"/>
</dbReference>
<dbReference type="Pfam" id="PF05151">
    <property type="entry name" value="PsbM"/>
    <property type="match status" value="1"/>
</dbReference>
<dbReference type="SUPFAM" id="SSF161033">
    <property type="entry name" value="Photosystem II reaction center protein M, PsbM"/>
    <property type="match status" value="1"/>
</dbReference>
<geneLocation type="chloroplast"/>
<name>PSBM_GOSBA</name>
<accession>A0ZZ29</accession>
<reference key="1">
    <citation type="journal article" date="2006" name="Genes Genet. Syst.">
        <title>Complete nucleotide sequence of the cotton (Gossypium barbadense L.) chloroplast genome with a comparative analysis of sequences among 9 dicot plants.</title>
        <authorList>
            <person name="Ibrahim R.I.H."/>
            <person name="Azuma J."/>
            <person name="Sakamoto M."/>
        </authorList>
    </citation>
    <scope>NUCLEOTIDE SEQUENCE [LARGE SCALE GENOMIC DNA]</scope>
</reference>
<feature type="chain" id="PRO_0000276240" description="Photosystem II reaction center protein M">
    <location>
        <begin position="1"/>
        <end position="34"/>
    </location>
</feature>
<feature type="transmembrane region" description="Helical" evidence="1">
    <location>
        <begin position="5"/>
        <end position="25"/>
    </location>
</feature>
<protein>
    <recommendedName>
        <fullName evidence="1">Photosystem II reaction center protein M</fullName>
        <shortName evidence="1">PSII-M</shortName>
    </recommendedName>
</protein>
<comment type="function">
    <text evidence="1">One of the components of the core complex of photosystem II (PSII). PSII is a light-driven water:plastoquinone oxidoreductase that uses light energy to abstract electrons from H(2)O, generating O(2) and a proton gradient subsequently used for ATP formation. It consists of a core antenna complex that captures photons, and an electron transfer chain that converts photonic excitation into a charge separation. This subunit is found at the monomer-monomer interface.</text>
</comment>
<comment type="subunit">
    <text evidence="1">PSII is composed of 1 copy each of membrane proteins PsbA, PsbB, PsbC, PsbD, PsbE, PsbF, PsbH, PsbI, PsbJ, PsbK, PsbL, PsbM, PsbT, PsbX, PsbY, PsbZ, Psb30/Ycf12, at least 3 peripheral proteins of the oxygen-evolving complex and a large number of cofactors. It forms dimeric complexes.</text>
</comment>
<comment type="subcellular location">
    <subcellularLocation>
        <location evidence="1">Plastid</location>
        <location evidence="1">Chloroplast thylakoid membrane</location>
        <topology evidence="1">Single-pass membrane protein</topology>
    </subcellularLocation>
</comment>
<comment type="similarity">
    <text evidence="1">Belongs to the PsbM family.</text>
</comment>
<gene>
    <name evidence="1" type="primary">psbM</name>
</gene>
<proteinExistence type="inferred from homology"/>
<organism>
    <name type="scientific">Gossypium barbadense</name>
    <name type="common">Sea Island cotton</name>
    <name type="synonym">Hibiscus barbadensis</name>
    <dbReference type="NCBI Taxonomy" id="3634"/>
    <lineage>
        <taxon>Eukaryota</taxon>
        <taxon>Viridiplantae</taxon>
        <taxon>Streptophyta</taxon>
        <taxon>Embryophyta</taxon>
        <taxon>Tracheophyta</taxon>
        <taxon>Spermatophyta</taxon>
        <taxon>Magnoliopsida</taxon>
        <taxon>eudicotyledons</taxon>
        <taxon>Gunneridae</taxon>
        <taxon>Pentapetalae</taxon>
        <taxon>rosids</taxon>
        <taxon>malvids</taxon>
        <taxon>Malvales</taxon>
        <taxon>Malvaceae</taxon>
        <taxon>Malvoideae</taxon>
        <taxon>Gossypium</taxon>
    </lineage>
</organism>
<keyword id="KW-0150">Chloroplast</keyword>
<keyword id="KW-0472">Membrane</keyword>
<keyword id="KW-0602">Photosynthesis</keyword>
<keyword id="KW-0604">Photosystem II</keyword>
<keyword id="KW-0934">Plastid</keyword>
<keyword id="KW-0674">Reaction center</keyword>
<keyword id="KW-0793">Thylakoid</keyword>
<keyword id="KW-0812">Transmembrane</keyword>
<keyword id="KW-1133">Transmembrane helix</keyword>